<keyword id="KW-0030">Aminoacyl-tRNA synthetase</keyword>
<keyword id="KW-0067">ATP-binding</keyword>
<keyword id="KW-0963">Cytoplasm</keyword>
<keyword id="KW-0436">Ligase</keyword>
<keyword id="KW-0547">Nucleotide-binding</keyword>
<keyword id="KW-0648">Protein biosynthesis</keyword>
<gene>
    <name evidence="1" type="primary">gltX</name>
    <name type="ordered locus">BcerKBAB4_0082</name>
</gene>
<comment type="function">
    <text evidence="1">Catalyzes the attachment of glutamate to tRNA(Glu) in a two-step reaction: glutamate is first activated by ATP to form Glu-AMP and then transferred to the acceptor end of tRNA(Glu).</text>
</comment>
<comment type="catalytic activity">
    <reaction evidence="1">
        <text>tRNA(Glu) + L-glutamate + ATP = L-glutamyl-tRNA(Glu) + AMP + diphosphate</text>
        <dbReference type="Rhea" id="RHEA:23540"/>
        <dbReference type="Rhea" id="RHEA-COMP:9663"/>
        <dbReference type="Rhea" id="RHEA-COMP:9680"/>
        <dbReference type="ChEBI" id="CHEBI:29985"/>
        <dbReference type="ChEBI" id="CHEBI:30616"/>
        <dbReference type="ChEBI" id="CHEBI:33019"/>
        <dbReference type="ChEBI" id="CHEBI:78442"/>
        <dbReference type="ChEBI" id="CHEBI:78520"/>
        <dbReference type="ChEBI" id="CHEBI:456215"/>
        <dbReference type="EC" id="6.1.1.17"/>
    </reaction>
</comment>
<comment type="subunit">
    <text evidence="1">Monomer.</text>
</comment>
<comment type="subcellular location">
    <subcellularLocation>
        <location evidence="1">Cytoplasm</location>
    </subcellularLocation>
</comment>
<comment type="similarity">
    <text evidence="1">Belongs to the class-I aminoacyl-tRNA synthetase family. Glutamate--tRNA ligase type 1 subfamily.</text>
</comment>
<proteinExistence type="inferred from homology"/>
<organism>
    <name type="scientific">Bacillus mycoides (strain KBAB4)</name>
    <name type="common">Bacillus weihenstephanensis</name>
    <dbReference type="NCBI Taxonomy" id="315730"/>
    <lineage>
        <taxon>Bacteria</taxon>
        <taxon>Bacillati</taxon>
        <taxon>Bacillota</taxon>
        <taxon>Bacilli</taxon>
        <taxon>Bacillales</taxon>
        <taxon>Bacillaceae</taxon>
        <taxon>Bacillus</taxon>
        <taxon>Bacillus cereus group</taxon>
    </lineage>
</organism>
<feature type="chain" id="PRO_1000090053" description="Glutamate--tRNA ligase">
    <location>
        <begin position="1"/>
        <end position="485"/>
    </location>
</feature>
<feature type="short sequence motif" description="'HIGH' region" evidence="1">
    <location>
        <begin position="11"/>
        <end position="21"/>
    </location>
</feature>
<feature type="short sequence motif" description="'KMSKS' region" evidence="1">
    <location>
        <begin position="252"/>
        <end position="256"/>
    </location>
</feature>
<feature type="binding site" evidence="1">
    <location>
        <position position="255"/>
    </location>
    <ligand>
        <name>ATP</name>
        <dbReference type="ChEBI" id="CHEBI:30616"/>
    </ligand>
</feature>
<sequence>MEKQVRVRYAPSPTGHLHIGNARTALFNYLFARHQDGKFIIRIEDTDVKRNVAGGEESQLKYLKWLGMDWDEGVDVGGEFGPYRQTERLDIYKKLYKDLLERDLAYKCYMTEEELEAEREGQIARGETPRYAGNHRDLTEEQIKGFEAEGRIPSIRFRVPADSDYTFKDLVKDEVAFHSNDFGDFVIVKKDGIPTYNFAVAVDDHLMEITHVLRGDDHISNTPKQMMIYEAFGWDIPKFGHMTLIVNESRKKLSKRDESIIQFIEQYKELGYLPEAIFNFIALLGWSPVGEEEVFSQDEFIKMFDAARLSKSPALFDSQKLKWMNNQYMKKQDLDTVVELSLPHLVKAGRVGENLSEQEQAWVRDVIALYHDQMSFGAEIVELSEMFFKDHVDHEEEGQEVLKGEQVPEVLRAFADQLEALEAMEPAAVKAAIKAVQKETGHKGKNLFMPIRVATTGQTHGPELPNAIALLGKEKVLNRIQKVIG</sequence>
<name>SYE_BACMK</name>
<reference key="1">
    <citation type="journal article" date="2008" name="Chem. Biol. Interact.">
        <title>Extending the Bacillus cereus group genomics to putative food-borne pathogens of different toxicity.</title>
        <authorList>
            <person name="Lapidus A."/>
            <person name="Goltsman E."/>
            <person name="Auger S."/>
            <person name="Galleron N."/>
            <person name="Segurens B."/>
            <person name="Dossat C."/>
            <person name="Land M.L."/>
            <person name="Broussolle V."/>
            <person name="Brillard J."/>
            <person name="Guinebretiere M.-H."/>
            <person name="Sanchis V."/>
            <person name="Nguen-the C."/>
            <person name="Lereclus D."/>
            <person name="Richardson P."/>
            <person name="Wincker P."/>
            <person name="Weissenbach J."/>
            <person name="Ehrlich S.D."/>
            <person name="Sorokin A."/>
        </authorList>
    </citation>
    <scope>NUCLEOTIDE SEQUENCE [LARGE SCALE GENOMIC DNA]</scope>
    <source>
        <strain>KBAB4</strain>
    </source>
</reference>
<evidence type="ECO:0000255" key="1">
    <source>
        <dbReference type="HAMAP-Rule" id="MF_00022"/>
    </source>
</evidence>
<dbReference type="EC" id="6.1.1.17" evidence="1"/>
<dbReference type="EMBL" id="CP000903">
    <property type="protein sequence ID" value="ABY41351.1"/>
    <property type="molecule type" value="Genomic_DNA"/>
</dbReference>
<dbReference type="RefSeq" id="WP_002091496.1">
    <property type="nucleotide sequence ID" value="NC_010184.1"/>
</dbReference>
<dbReference type="SMR" id="A9VNA0"/>
<dbReference type="KEGG" id="bwe:BcerKBAB4_0082"/>
<dbReference type="eggNOG" id="COG0008">
    <property type="taxonomic scope" value="Bacteria"/>
</dbReference>
<dbReference type="HOGENOM" id="CLU_015768_6_1_9"/>
<dbReference type="Proteomes" id="UP000002154">
    <property type="component" value="Chromosome"/>
</dbReference>
<dbReference type="GO" id="GO:0005829">
    <property type="term" value="C:cytosol"/>
    <property type="evidence" value="ECO:0007669"/>
    <property type="project" value="TreeGrafter"/>
</dbReference>
<dbReference type="GO" id="GO:0005524">
    <property type="term" value="F:ATP binding"/>
    <property type="evidence" value="ECO:0007669"/>
    <property type="project" value="UniProtKB-UniRule"/>
</dbReference>
<dbReference type="GO" id="GO:0004818">
    <property type="term" value="F:glutamate-tRNA ligase activity"/>
    <property type="evidence" value="ECO:0007669"/>
    <property type="project" value="UniProtKB-UniRule"/>
</dbReference>
<dbReference type="GO" id="GO:0000049">
    <property type="term" value="F:tRNA binding"/>
    <property type="evidence" value="ECO:0007669"/>
    <property type="project" value="InterPro"/>
</dbReference>
<dbReference type="GO" id="GO:0008270">
    <property type="term" value="F:zinc ion binding"/>
    <property type="evidence" value="ECO:0007669"/>
    <property type="project" value="InterPro"/>
</dbReference>
<dbReference type="GO" id="GO:0006424">
    <property type="term" value="P:glutamyl-tRNA aminoacylation"/>
    <property type="evidence" value="ECO:0007669"/>
    <property type="project" value="UniProtKB-UniRule"/>
</dbReference>
<dbReference type="CDD" id="cd00808">
    <property type="entry name" value="GluRS_core"/>
    <property type="match status" value="1"/>
</dbReference>
<dbReference type="FunFam" id="1.10.10.350:FF:000002">
    <property type="entry name" value="Glutamate--tRNA ligase"/>
    <property type="match status" value="1"/>
</dbReference>
<dbReference type="FunFam" id="3.40.50.620:FF:000007">
    <property type="entry name" value="Glutamate--tRNA ligase"/>
    <property type="match status" value="1"/>
</dbReference>
<dbReference type="Gene3D" id="1.10.10.350">
    <property type="match status" value="1"/>
</dbReference>
<dbReference type="Gene3D" id="3.40.50.620">
    <property type="entry name" value="HUPs"/>
    <property type="match status" value="1"/>
</dbReference>
<dbReference type="HAMAP" id="MF_00022">
    <property type="entry name" value="Glu_tRNA_synth_type1"/>
    <property type="match status" value="1"/>
</dbReference>
<dbReference type="InterPro" id="IPR045462">
    <property type="entry name" value="aa-tRNA-synth_I_cd-bd"/>
</dbReference>
<dbReference type="InterPro" id="IPR020751">
    <property type="entry name" value="aa-tRNA-synth_I_codon-bd_sub2"/>
</dbReference>
<dbReference type="InterPro" id="IPR001412">
    <property type="entry name" value="aa-tRNA-synth_I_CS"/>
</dbReference>
<dbReference type="InterPro" id="IPR008925">
    <property type="entry name" value="aa_tRNA-synth_I_cd-bd_sf"/>
</dbReference>
<dbReference type="InterPro" id="IPR004527">
    <property type="entry name" value="Glu-tRNA-ligase_bac/mito"/>
</dbReference>
<dbReference type="InterPro" id="IPR000924">
    <property type="entry name" value="Glu/Gln-tRNA-synth"/>
</dbReference>
<dbReference type="InterPro" id="IPR020058">
    <property type="entry name" value="Glu/Gln-tRNA-synth_Ib_cat-dom"/>
</dbReference>
<dbReference type="InterPro" id="IPR049940">
    <property type="entry name" value="GluQ/Sye"/>
</dbReference>
<dbReference type="InterPro" id="IPR033910">
    <property type="entry name" value="GluRS_core"/>
</dbReference>
<dbReference type="InterPro" id="IPR014729">
    <property type="entry name" value="Rossmann-like_a/b/a_fold"/>
</dbReference>
<dbReference type="NCBIfam" id="TIGR00464">
    <property type="entry name" value="gltX_bact"/>
    <property type="match status" value="1"/>
</dbReference>
<dbReference type="PANTHER" id="PTHR43311">
    <property type="entry name" value="GLUTAMATE--TRNA LIGASE"/>
    <property type="match status" value="1"/>
</dbReference>
<dbReference type="PANTHER" id="PTHR43311:SF2">
    <property type="entry name" value="GLUTAMATE--TRNA LIGASE, MITOCHONDRIAL-RELATED"/>
    <property type="match status" value="1"/>
</dbReference>
<dbReference type="Pfam" id="PF19269">
    <property type="entry name" value="Anticodon_2"/>
    <property type="match status" value="1"/>
</dbReference>
<dbReference type="Pfam" id="PF00749">
    <property type="entry name" value="tRNA-synt_1c"/>
    <property type="match status" value="1"/>
</dbReference>
<dbReference type="PRINTS" id="PR00987">
    <property type="entry name" value="TRNASYNTHGLU"/>
</dbReference>
<dbReference type="SUPFAM" id="SSF48163">
    <property type="entry name" value="An anticodon-binding domain of class I aminoacyl-tRNA synthetases"/>
    <property type="match status" value="1"/>
</dbReference>
<dbReference type="SUPFAM" id="SSF52374">
    <property type="entry name" value="Nucleotidylyl transferase"/>
    <property type="match status" value="1"/>
</dbReference>
<dbReference type="PROSITE" id="PS00178">
    <property type="entry name" value="AA_TRNA_LIGASE_I"/>
    <property type="match status" value="1"/>
</dbReference>
<accession>A9VNA0</accession>
<protein>
    <recommendedName>
        <fullName evidence="1">Glutamate--tRNA ligase</fullName>
        <ecNumber evidence="1">6.1.1.17</ecNumber>
    </recommendedName>
    <alternativeName>
        <fullName evidence="1">Glutamyl-tRNA synthetase</fullName>
        <shortName evidence="1">GluRS</shortName>
    </alternativeName>
</protein>